<organism>
    <name type="scientific">Staphylococcus aureus (strain Newman)</name>
    <dbReference type="NCBI Taxonomy" id="426430"/>
    <lineage>
        <taxon>Bacteria</taxon>
        <taxon>Bacillati</taxon>
        <taxon>Bacillota</taxon>
        <taxon>Bacilli</taxon>
        <taxon>Bacillales</taxon>
        <taxon>Staphylococcaceae</taxon>
        <taxon>Staphylococcus</taxon>
    </lineage>
</organism>
<feature type="chain" id="PRO_1000072985" description="2,3-bisphosphoglycerate-dependent phosphoglycerate mutase">
    <location>
        <begin position="1"/>
        <end position="228"/>
    </location>
</feature>
<feature type="active site" description="Tele-phosphohistidine intermediate" evidence="1">
    <location>
        <position position="9"/>
    </location>
</feature>
<feature type="active site" description="Proton donor/acceptor" evidence="1">
    <location>
        <position position="87"/>
    </location>
</feature>
<feature type="binding site" evidence="1">
    <location>
        <begin position="8"/>
        <end position="15"/>
    </location>
    <ligand>
        <name>substrate</name>
    </ligand>
</feature>
<feature type="binding site" evidence="1">
    <location>
        <begin position="21"/>
        <end position="22"/>
    </location>
    <ligand>
        <name>substrate</name>
    </ligand>
</feature>
<feature type="binding site" evidence="1">
    <location>
        <position position="60"/>
    </location>
    <ligand>
        <name>substrate</name>
    </ligand>
</feature>
<feature type="binding site" evidence="1">
    <location>
        <begin position="87"/>
        <end position="90"/>
    </location>
    <ligand>
        <name>substrate</name>
    </ligand>
</feature>
<feature type="binding site" evidence="1">
    <location>
        <position position="98"/>
    </location>
    <ligand>
        <name>substrate</name>
    </ligand>
</feature>
<feature type="binding site" evidence="1">
    <location>
        <begin position="114"/>
        <end position="115"/>
    </location>
    <ligand>
        <name>substrate</name>
    </ligand>
</feature>
<feature type="binding site" evidence="1">
    <location>
        <begin position="183"/>
        <end position="184"/>
    </location>
    <ligand>
        <name>substrate</name>
    </ligand>
</feature>
<feature type="site" description="Transition state stabilizer" evidence="1">
    <location>
        <position position="182"/>
    </location>
</feature>
<dbReference type="EC" id="5.4.2.11" evidence="1"/>
<dbReference type="EMBL" id="AP009351">
    <property type="protein sequence ID" value="BAF68587.1"/>
    <property type="molecule type" value="Genomic_DNA"/>
</dbReference>
<dbReference type="RefSeq" id="WP_001125208.1">
    <property type="nucleotide sequence ID" value="NZ_JBBIAE010000004.1"/>
</dbReference>
<dbReference type="SMR" id="A6QJQ5"/>
<dbReference type="KEGG" id="sae:NWMN_2315"/>
<dbReference type="HOGENOM" id="CLU_033323_1_5_9"/>
<dbReference type="UniPathway" id="UPA00109">
    <property type="reaction ID" value="UER00186"/>
</dbReference>
<dbReference type="Proteomes" id="UP000006386">
    <property type="component" value="Chromosome"/>
</dbReference>
<dbReference type="GO" id="GO:0004619">
    <property type="term" value="F:phosphoglycerate mutase activity"/>
    <property type="evidence" value="ECO:0007669"/>
    <property type="project" value="UniProtKB-EC"/>
</dbReference>
<dbReference type="GO" id="GO:0006094">
    <property type="term" value="P:gluconeogenesis"/>
    <property type="evidence" value="ECO:0007669"/>
    <property type="project" value="UniProtKB-UniRule"/>
</dbReference>
<dbReference type="GO" id="GO:0006096">
    <property type="term" value="P:glycolytic process"/>
    <property type="evidence" value="ECO:0007669"/>
    <property type="project" value="UniProtKB-UniRule"/>
</dbReference>
<dbReference type="CDD" id="cd07067">
    <property type="entry name" value="HP_PGM_like"/>
    <property type="match status" value="1"/>
</dbReference>
<dbReference type="FunFam" id="3.40.50.1240:FF:000003">
    <property type="entry name" value="2,3-bisphosphoglycerate-dependent phosphoglycerate mutase"/>
    <property type="match status" value="1"/>
</dbReference>
<dbReference type="Gene3D" id="3.40.50.1240">
    <property type="entry name" value="Phosphoglycerate mutase-like"/>
    <property type="match status" value="1"/>
</dbReference>
<dbReference type="HAMAP" id="MF_01039">
    <property type="entry name" value="PGAM_GpmA"/>
    <property type="match status" value="1"/>
</dbReference>
<dbReference type="InterPro" id="IPR013078">
    <property type="entry name" value="His_Pase_superF_clade-1"/>
</dbReference>
<dbReference type="InterPro" id="IPR029033">
    <property type="entry name" value="His_PPase_superfam"/>
</dbReference>
<dbReference type="InterPro" id="IPR001345">
    <property type="entry name" value="PG/BPGM_mutase_AS"/>
</dbReference>
<dbReference type="InterPro" id="IPR005952">
    <property type="entry name" value="Phosphogly_mut1"/>
</dbReference>
<dbReference type="NCBIfam" id="TIGR01258">
    <property type="entry name" value="pgm_1"/>
    <property type="match status" value="1"/>
</dbReference>
<dbReference type="NCBIfam" id="NF010713">
    <property type="entry name" value="PRK14115.1"/>
    <property type="match status" value="1"/>
</dbReference>
<dbReference type="NCBIfam" id="NF010717">
    <property type="entry name" value="PRK14119.1"/>
    <property type="match status" value="1"/>
</dbReference>
<dbReference type="PANTHER" id="PTHR11931">
    <property type="entry name" value="PHOSPHOGLYCERATE MUTASE"/>
    <property type="match status" value="1"/>
</dbReference>
<dbReference type="Pfam" id="PF00300">
    <property type="entry name" value="His_Phos_1"/>
    <property type="match status" value="1"/>
</dbReference>
<dbReference type="PIRSF" id="PIRSF000709">
    <property type="entry name" value="6PFK_2-Ptase"/>
    <property type="match status" value="1"/>
</dbReference>
<dbReference type="SMART" id="SM00855">
    <property type="entry name" value="PGAM"/>
    <property type="match status" value="1"/>
</dbReference>
<dbReference type="SUPFAM" id="SSF53254">
    <property type="entry name" value="Phosphoglycerate mutase-like"/>
    <property type="match status" value="1"/>
</dbReference>
<dbReference type="PROSITE" id="PS00175">
    <property type="entry name" value="PG_MUTASE"/>
    <property type="match status" value="1"/>
</dbReference>
<keyword id="KW-0312">Gluconeogenesis</keyword>
<keyword id="KW-0324">Glycolysis</keyword>
<keyword id="KW-0413">Isomerase</keyword>
<accession>A6QJQ5</accession>
<comment type="function">
    <text evidence="1">Catalyzes the interconversion of 2-phosphoglycerate and 3-phosphoglycerate.</text>
</comment>
<comment type="catalytic activity">
    <reaction evidence="1">
        <text>(2R)-2-phosphoglycerate = (2R)-3-phosphoglycerate</text>
        <dbReference type="Rhea" id="RHEA:15901"/>
        <dbReference type="ChEBI" id="CHEBI:58272"/>
        <dbReference type="ChEBI" id="CHEBI:58289"/>
        <dbReference type="EC" id="5.4.2.11"/>
    </reaction>
</comment>
<comment type="pathway">
    <text evidence="1">Carbohydrate degradation; glycolysis; pyruvate from D-glyceraldehyde 3-phosphate: step 3/5.</text>
</comment>
<comment type="similarity">
    <text evidence="1">Belongs to the phosphoglycerate mutase family. BPG-dependent PGAM subfamily.</text>
</comment>
<name>GPMA_STAAE</name>
<gene>
    <name evidence="1" type="primary">gpmA</name>
    <name type="ordered locus">NWMN_2315</name>
</gene>
<reference key="1">
    <citation type="journal article" date="2008" name="J. Bacteriol.">
        <title>Genome sequence of Staphylococcus aureus strain Newman and comparative analysis of staphylococcal genomes: polymorphism and evolution of two major pathogenicity islands.</title>
        <authorList>
            <person name="Baba T."/>
            <person name="Bae T."/>
            <person name="Schneewind O."/>
            <person name="Takeuchi F."/>
            <person name="Hiramatsu K."/>
        </authorList>
    </citation>
    <scope>NUCLEOTIDE SEQUENCE [LARGE SCALE GENOMIC DNA]</scope>
    <source>
        <strain>Newman</strain>
    </source>
</reference>
<evidence type="ECO:0000255" key="1">
    <source>
        <dbReference type="HAMAP-Rule" id="MF_01039"/>
    </source>
</evidence>
<protein>
    <recommendedName>
        <fullName evidence="1">2,3-bisphosphoglycerate-dependent phosphoglycerate mutase</fullName>
        <shortName evidence="1">BPG-dependent PGAM</shortName>
        <shortName evidence="1">PGAM</shortName>
        <shortName evidence="1">Phosphoglyceromutase</shortName>
        <shortName evidence="1">dPGM</shortName>
        <ecNumber evidence="1">5.4.2.11</ecNumber>
    </recommendedName>
</protein>
<sequence length="228" mass="26680">MPKLILCRHGQSEWNAKNLFTGWEDVNLSEQGINEATRAGEKVRENNIAIDVAFTSLLTRALDTTHYILTESKQQWIPVYKSWRLNERHYGGLQGLNKDDARKEFGEEQVHIWRRSYDVKPPAETEEQREAYLADRRYNHLDKRMMPYSESLKDTLVRVIPFWTDHISQYLLDGQTVLVSAHGNSIRALIKYLEDVSDEDIINYEIKTGAPLVYELTDDLEVIDKYYL</sequence>
<proteinExistence type="inferred from homology"/>